<gene>
    <name type="primary">SAD1</name>
    <name type="ordered locus">YFR005C</name>
</gene>
<accession>P43589</accession>
<accession>D6VTN5</accession>
<reference key="1">
    <citation type="journal article" date="1995" name="Nat. Genet.">
        <title>Analysis of the nucleotide sequence of chromosome VI from Saccharomyces cerevisiae.</title>
        <authorList>
            <person name="Murakami Y."/>
            <person name="Naitou M."/>
            <person name="Hagiwara H."/>
            <person name="Shibata T."/>
            <person name="Ozawa M."/>
            <person name="Sasanuma S."/>
            <person name="Sasanuma M."/>
            <person name="Tsuchiya Y."/>
            <person name="Soeda E."/>
            <person name="Yokoyama K."/>
            <person name="Yamazaki M."/>
            <person name="Tashiro H."/>
            <person name="Eki T."/>
        </authorList>
    </citation>
    <scope>NUCLEOTIDE SEQUENCE [LARGE SCALE GENOMIC DNA]</scope>
    <source>
        <strain>ATCC 204508 / S288c</strain>
    </source>
</reference>
<reference key="2">
    <citation type="journal article" date="2014" name="G3 (Bethesda)">
        <title>The reference genome sequence of Saccharomyces cerevisiae: Then and now.</title>
        <authorList>
            <person name="Engel S.R."/>
            <person name="Dietrich F.S."/>
            <person name="Fisk D.G."/>
            <person name="Binkley G."/>
            <person name="Balakrishnan R."/>
            <person name="Costanzo M.C."/>
            <person name="Dwight S.S."/>
            <person name="Hitz B.C."/>
            <person name="Karra K."/>
            <person name="Nash R.S."/>
            <person name="Weng S."/>
            <person name="Wong E.D."/>
            <person name="Lloyd P."/>
            <person name="Skrzypek M.S."/>
            <person name="Miyasato S.R."/>
            <person name="Simison M."/>
            <person name="Cherry J.M."/>
        </authorList>
    </citation>
    <scope>GENOME REANNOTATION</scope>
    <source>
        <strain>ATCC 204508 / S288c</strain>
    </source>
</reference>
<reference key="3">
    <citation type="journal article" date="2007" name="Genome Res.">
        <title>Approaching a complete repository of sequence-verified protein-encoding clones for Saccharomyces cerevisiae.</title>
        <authorList>
            <person name="Hu Y."/>
            <person name="Rolfs A."/>
            <person name="Bhullar B."/>
            <person name="Murthy T.V.S."/>
            <person name="Zhu C."/>
            <person name="Berger M.F."/>
            <person name="Camargo A.A."/>
            <person name="Kelley F."/>
            <person name="McCarron S."/>
            <person name="Jepson D."/>
            <person name="Richardson A."/>
            <person name="Raphael J."/>
            <person name="Moreira D."/>
            <person name="Taycher E."/>
            <person name="Zuo D."/>
            <person name="Mohr S."/>
            <person name="Kane M.F."/>
            <person name="Williamson J."/>
            <person name="Simpson A.J.G."/>
            <person name="Bulyk M.L."/>
            <person name="Harlow E."/>
            <person name="Marsischky G."/>
            <person name="Kolodner R.D."/>
            <person name="LaBaer J."/>
        </authorList>
    </citation>
    <scope>NUCLEOTIDE SEQUENCE [GENOMIC DNA]</scope>
    <source>
        <strain>ATCC 204508 / S288c</strain>
    </source>
</reference>
<reference key="4">
    <citation type="journal article" date="1999" name="Mol. Cell. Biol.">
        <title>A novel genetic screen for snRNP assembly factors in yeast identifies a conserved protein, Sad1p, also required for pre-mRNA splicing.</title>
        <authorList>
            <person name="Lygerou Z."/>
            <person name="Christophides G."/>
            <person name="Seraphin B."/>
        </authorList>
    </citation>
    <scope>FUNCTION</scope>
    <scope>SUBCELLULAR LOCATION</scope>
</reference>
<reference key="5">
    <citation type="journal article" date="2002" name="Mol. Cell">
        <title>Composition and functional characterization of the yeast spliceosomal penta-snRNP.</title>
        <authorList>
            <person name="Stevens S.W."/>
            <person name="Ryan D.E."/>
            <person name="Ge H.Y."/>
            <person name="Moore R.E."/>
            <person name="Young M.K."/>
            <person name="Lee T.D."/>
            <person name="Abelson J."/>
        </authorList>
    </citation>
    <scope>IDENTIFICATION IN U1.U2.U4/U6.U5 PENTA-SNRNP COMPLEX</scope>
    <scope>IDENTIFICATION BY MASS SPECTROMETRY</scope>
</reference>
<reference key="6">
    <citation type="journal article" date="2003" name="Nature">
        <title>Global analysis of protein localization in budding yeast.</title>
        <authorList>
            <person name="Huh W.-K."/>
            <person name="Falvo J.V."/>
            <person name="Gerke L.C."/>
            <person name="Carroll A.S."/>
            <person name="Howson R.W."/>
            <person name="Weissman J.S."/>
            <person name="O'Shea E.K."/>
        </authorList>
    </citation>
    <scope>SUBCELLULAR LOCATION [LARGE SCALE ANALYSIS]</scope>
</reference>
<reference key="7">
    <citation type="journal article" date="2003" name="Nature">
        <title>Global analysis of protein expression in yeast.</title>
        <authorList>
            <person name="Ghaemmaghami S."/>
            <person name="Huh W.-K."/>
            <person name="Bower K."/>
            <person name="Howson R.W."/>
            <person name="Belle A."/>
            <person name="Dephoure N."/>
            <person name="O'Shea E.K."/>
            <person name="Weissman J.S."/>
        </authorList>
    </citation>
    <scope>LEVEL OF PROTEIN EXPRESSION [LARGE SCALE ANALYSIS]</scope>
</reference>
<reference key="8">
    <citation type="journal article" date="2007" name="Proc. Natl. Acad. Sci. U.S.A.">
        <title>Analysis of phosphorylation sites on proteins from Saccharomyces cerevisiae by electron transfer dissociation (ETD) mass spectrometry.</title>
        <authorList>
            <person name="Chi A."/>
            <person name="Huttenhower C."/>
            <person name="Geer L.Y."/>
            <person name="Coon J.J."/>
            <person name="Syka J.E.P."/>
            <person name="Bai D.L."/>
            <person name="Shabanowitz J."/>
            <person name="Burke D.J."/>
            <person name="Troyanskaya O.G."/>
            <person name="Hunt D.F."/>
        </authorList>
    </citation>
    <scope>IDENTIFICATION BY MASS SPECTROMETRY [LARGE SCALE ANALYSIS]</scope>
</reference>
<reference key="9">
    <citation type="journal article" date="2012" name="Proc. Natl. Acad. Sci. U.S.A.">
        <title>N-terminal acetylome analyses and functional insights of the N-terminal acetyltransferase NatB.</title>
        <authorList>
            <person name="Van Damme P."/>
            <person name="Lasa M."/>
            <person name="Polevoda B."/>
            <person name="Gazquez C."/>
            <person name="Elosegui-Artola A."/>
            <person name="Kim D.S."/>
            <person name="De Juan-Pardo E."/>
            <person name="Demeyer K."/>
            <person name="Hole K."/>
            <person name="Larrea E."/>
            <person name="Timmerman E."/>
            <person name="Prieto J."/>
            <person name="Arnesen T."/>
            <person name="Sherman F."/>
            <person name="Gevaert K."/>
            <person name="Aldabe R."/>
        </authorList>
    </citation>
    <scope>ACETYLATION [LARGE SCALE ANALYSIS] AT MET-1</scope>
    <scope>IDENTIFICATION BY MASS SPECTROMETRY [LARGE SCALE ANALYSIS]</scope>
</reference>
<name>SAD1_YEAST</name>
<organism>
    <name type="scientific">Saccharomyces cerevisiae (strain ATCC 204508 / S288c)</name>
    <name type="common">Baker's yeast</name>
    <dbReference type="NCBI Taxonomy" id="559292"/>
    <lineage>
        <taxon>Eukaryota</taxon>
        <taxon>Fungi</taxon>
        <taxon>Dikarya</taxon>
        <taxon>Ascomycota</taxon>
        <taxon>Saccharomycotina</taxon>
        <taxon>Saccharomycetes</taxon>
        <taxon>Saccharomycetales</taxon>
        <taxon>Saccharomycetaceae</taxon>
        <taxon>Saccharomyces</taxon>
    </lineage>
</organism>
<protein>
    <recommendedName>
        <fullName>Pre-mRNA-splicing factor SAD1</fullName>
    </recommendedName>
    <alternativeName>
        <fullName>snRNP assembly-defective protein 1</fullName>
    </alternativeName>
</protein>
<dbReference type="EMBL" id="D50617">
    <property type="protein sequence ID" value="BAA09244.1"/>
    <property type="molecule type" value="Genomic_DNA"/>
</dbReference>
<dbReference type="EMBL" id="AY692766">
    <property type="protein sequence ID" value="AAT92785.1"/>
    <property type="molecule type" value="Genomic_DNA"/>
</dbReference>
<dbReference type="EMBL" id="BK006940">
    <property type="protein sequence ID" value="DAA12445.1"/>
    <property type="molecule type" value="Genomic_DNA"/>
</dbReference>
<dbReference type="PIR" id="S56260">
    <property type="entry name" value="S56260"/>
</dbReference>
<dbReference type="RefSeq" id="NP_116660.1">
    <property type="nucleotide sequence ID" value="NM_001179970.1"/>
</dbReference>
<dbReference type="PDB" id="4MSX">
    <property type="method" value="X-ray"/>
    <property type="resolution" value="1.87 A"/>
    <property type="chains" value="A=1-448"/>
</dbReference>
<dbReference type="PDBsum" id="4MSX"/>
<dbReference type="SMR" id="P43589"/>
<dbReference type="BioGRID" id="31153">
    <property type="interactions" value="454"/>
</dbReference>
<dbReference type="ComplexPortal" id="CPX-25">
    <property type="entry name" value="U4/U6.U5 tri-small nuclear ribonucleoprotein complex"/>
</dbReference>
<dbReference type="FunCoup" id="P43589">
    <property type="interactions" value="1172"/>
</dbReference>
<dbReference type="IntAct" id="P43589">
    <property type="interactions" value="2"/>
</dbReference>
<dbReference type="STRING" id="4932.YFR005C"/>
<dbReference type="MEROPS" id="C19.972"/>
<dbReference type="iPTMnet" id="P43589"/>
<dbReference type="PaxDb" id="4932-YFR005C"/>
<dbReference type="PeptideAtlas" id="P43589"/>
<dbReference type="EnsemblFungi" id="YFR005C_mRNA">
    <property type="protein sequence ID" value="YFR005C"/>
    <property type="gene ID" value="YFR005C"/>
</dbReference>
<dbReference type="GeneID" id="850555"/>
<dbReference type="KEGG" id="sce:YFR005C"/>
<dbReference type="AGR" id="SGD:S000001901"/>
<dbReference type="SGD" id="S000001901">
    <property type="gene designation" value="SAD1"/>
</dbReference>
<dbReference type="VEuPathDB" id="FungiDB:YFR005C"/>
<dbReference type="eggNOG" id="KOG2026">
    <property type="taxonomic scope" value="Eukaryota"/>
</dbReference>
<dbReference type="GeneTree" id="ENSGT00940000176217"/>
<dbReference type="HOGENOM" id="CLU_016848_2_1_1"/>
<dbReference type="InParanoid" id="P43589"/>
<dbReference type="OMA" id="PQFLIFH"/>
<dbReference type="OrthoDB" id="10263353at2759"/>
<dbReference type="BioCyc" id="YEAST:G3O-30458-MONOMER"/>
<dbReference type="BioGRID-ORCS" id="850555">
    <property type="hits" value="1 hit in 10 CRISPR screens"/>
</dbReference>
<dbReference type="EvolutionaryTrace" id="P43589"/>
<dbReference type="PRO" id="PR:P43589"/>
<dbReference type="Proteomes" id="UP000002311">
    <property type="component" value="Chromosome VI"/>
</dbReference>
<dbReference type="RNAct" id="P43589">
    <property type="molecule type" value="protein"/>
</dbReference>
<dbReference type="GO" id="GO:0005634">
    <property type="term" value="C:nucleus"/>
    <property type="evidence" value="ECO:0000314"/>
    <property type="project" value="SGD"/>
</dbReference>
<dbReference type="GO" id="GO:0005681">
    <property type="term" value="C:spliceosomal complex"/>
    <property type="evidence" value="ECO:0000303"/>
    <property type="project" value="ComplexPortal"/>
</dbReference>
<dbReference type="GO" id="GO:0046540">
    <property type="term" value="C:U4/U6 x U5 tri-snRNP complex"/>
    <property type="evidence" value="ECO:0000303"/>
    <property type="project" value="ComplexPortal"/>
</dbReference>
<dbReference type="GO" id="GO:0004843">
    <property type="term" value="F:cysteine-type deubiquitinase activity"/>
    <property type="evidence" value="ECO:0007669"/>
    <property type="project" value="InterPro"/>
</dbReference>
<dbReference type="GO" id="GO:0008270">
    <property type="term" value="F:zinc ion binding"/>
    <property type="evidence" value="ECO:0007669"/>
    <property type="project" value="UniProtKB-KW"/>
</dbReference>
<dbReference type="GO" id="GO:0000398">
    <property type="term" value="P:mRNA splicing, via spliceosome"/>
    <property type="evidence" value="ECO:0000314"/>
    <property type="project" value="SGD"/>
</dbReference>
<dbReference type="GO" id="GO:0016579">
    <property type="term" value="P:protein deubiquitination"/>
    <property type="evidence" value="ECO:0007669"/>
    <property type="project" value="InterPro"/>
</dbReference>
<dbReference type="GO" id="GO:0000245">
    <property type="term" value="P:spliceosomal complex assembly"/>
    <property type="evidence" value="ECO:0000314"/>
    <property type="project" value="SGD"/>
</dbReference>
<dbReference type="CDD" id="cd02669">
    <property type="entry name" value="Peptidase_C19M"/>
    <property type="match status" value="1"/>
</dbReference>
<dbReference type="FunFam" id="3.90.70.10:FF:000216">
    <property type="entry name" value="Pre-mRNA-splicing factor SAD1"/>
    <property type="match status" value="1"/>
</dbReference>
<dbReference type="Gene3D" id="3.90.70.10">
    <property type="entry name" value="Cysteine proteinases"/>
    <property type="match status" value="1"/>
</dbReference>
<dbReference type="Gene3D" id="3.30.40.10">
    <property type="entry name" value="Zinc/RING finger domain, C3HC4 (zinc finger)"/>
    <property type="match status" value="1"/>
</dbReference>
<dbReference type="InterPro" id="IPR038765">
    <property type="entry name" value="Papain-like_cys_pep_sf"/>
</dbReference>
<dbReference type="InterPro" id="IPR001394">
    <property type="entry name" value="Peptidase_C19_UCH"/>
</dbReference>
<dbReference type="InterPro" id="IPR050185">
    <property type="entry name" value="Ub_carboxyl-term_hydrolase"/>
</dbReference>
<dbReference type="InterPro" id="IPR033809">
    <property type="entry name" value="USP39"/>
</dbReference>
<dbReference type="InterPro" id="IPR028889">
    <property type="entry name" value="USP_dom"/>
</dbReference>
<dbReference type="InterPro" id="IPR013083">
    <property type="entry name" value="Znf_RING/FYVE/PHD"/>
</dbReference>
<dbReference type="InterPro" id="IPR001607">
    <property type="entry name" value="Znf_UBP"/>
</dbReference>
<dbReference type="PANTHER" id="PTHR21646:SF16">
    <property type="entry name" value="U4_U6.U5 TRI-SNRNP-ASSOCIATED PROTEIN 2"/>
    <property type="match status" value="1"/>
</dbReference>
<dbReference type="PANTHER" id="PTHR21646">
    <property type="entry name" value="UBIQUITIN CARBOXYL-TERMINAL HYDROLASE"/>
    <property type="match status" value="1"/>
</dbReference>
<dbReference type="Pfam" id="PF00443">
    <property type="entry name" value="UCH"/>
    <property type="match status" value="1"/>
</dbReference>
<dbReference type="Pfam" id="PF02148">
    <property type="entry name" value="zf-UBP"/>
    <property type="match status" value="1"/>
</dbReference>
<dbReference type="SMART" id="SM00290">
    <property type="entry name" value="ZnF_UBP"/>
    <property type="match status" value="1"/>
</dbReference>
<dbReference type="SUPFAM" id="SSF54001">
    <property type="entry name" value="Cysteine proteinases"/>
    <property type="match status" value="1"/>
</dbReference>
<dbReference type="SUPFAM" id="SSF57850">
    <property type="entry name" value="RING/U-box"/>
    <property type="match status" value="1"/>
</dbReference>
<dbReference type="PROSITE" id="PS50235">
    <property type="entry name" value="USP_3"/>
    <property type="match status" value="1"/>
</dbReference>
<dbReference type="PROSITE" id="PS50271">
    <property type="entry name" value="ZF_UBP"/>
    <property type="match status" value="1"/>
</dbReference>
<comment type="function">
    <text evidence="2">Promotes the assembly of newly synthesized U4 snRNA into the U4/U6 snRNP particle. Required for splicing of pre-mRNA.</text>
</comment>
<comment type="subunit">
    <text evidence="3">Component of the 45S U1.U2.U4/U6.U5 penta-snRNP particle, a subcomplex of the spliceosome.</text>
</comment>
<comment type="subcellular location">
    <subcellularLocation>
        <location evidence="2 4">Nucleus</location>
    </subcellularLocation>
</comment>
<comment type="miscellaneous">
    <text evidence="5">Present with 167 molecules/cell in log phase SD medium.</text>
</comment>
<evidence type="ECO:0000255" key="1">
    <source>
        <dbReference type="PROSITE-ProRule" id="PRU00502"/>
    </source>
</evidence>
<evidence type="ECO:0000269" key="2">
    <source>
    </source>
</evidence>
<evidence type="ECO:0000269" key="3">
    <source>
    </source>
</evidence>
<evidence type="ECO:0000269" key="4">
    <source>
    </source>
</evidence>
<evidence type="ECO:0000269" key="5">
    <source>
    </source>
</evidence>
<evidence type="ECO:0007744" key="6">
    <source>
    </source>
</evidence>
<evidence type="ECO:0007829" key="7">
    <source>
        <dbReference type="PDB" id="4MSX"/>
    </source>
</evidence>
<keyword id="KW-0002">3D-structure</keyword>
<keyword id="KW-0007">Acetylation</keyword>
<keyword id="KW-0479">Metal-binding</keyword>
<keyword id="KW-0507">mRNA processing</keyword>
<keyword id="KW-0508">mRNA splicing</keyword>
<keyword id="KW-0539">Nucleus</keyword>
<keyword id="KW-1185">Reference proteome</keyword>
<keyword id="KW-0687">Ribonucleoprotein</keyword>
<keyword id="KW-0747">Spliceosome</keyword>
<keyword id="KW-0862">Zinc</keyword>
<keyword id="KW-0863">Zinc-finger</keyword>
<sequence length="448" mass="52167">MEVDNKRRHSEDELKQEAVKKIKSQEPNYAYLETVVREKLDFDSEKICCITLSPLNVYCCLVCGHYYQGRHEKSPAFIHSIDENHHVFLNLTSLKFYMLPQNVQILHDGEVQLLNSIKFAAYPTYCPKDLEDFPRQCFDLSNRTYLNGFIGFTNAATYDYAHSVLLLISHMVPVRDHFLLNHFDNQGEFIKRLSICVKKIWSPKLFKHHLSVDDFVSYLKVREGLNLNPIDPRLFLLWLFNKICSSSNDLKSILNHSCKGKVKIAKVENKPEASESVTGKVIVKPFWVLTLDLPEFSPFEDGNSVDDLPQINITKLLTKFTKSRSSSTSTVFELTRLPQFLIFHFNRFDRNSDHPVKNRNQTLVEFSSELEILHVKYRLKANVVHVVIKQPSTDGNAFNGDEKSHWITQLYDNKSEKWIEIDGINTTEREAELLFLKETFIQVWEKQE</sequence>
<proteinExistence type="evidence at protein level"/>
<feature type="chain" id="PRO_0000202682" description="Pre-mRNA-splicing factor SAD1">
    <location>
        <begin position="1"/>
        <end position="448"/>
    </location>
</feature>
<feature type="domain" description="USP">
    <location>
        <begin position="150"/>
        <end position="447"/>
    </location>
</feature>
<feature type="zinc finger region" description="UBP-type; degenerate" evidence="1">
    <location>
        <begin position="27"/>
        <end position="124"/>
    </location>
</feature>
<feature type="binding site" evidence="1">
    <location>
        <position position="60"/>
    </location>
    <ligand>
        <name>Zn(2+)</name>
        <dbReference type="ChEBI" id="CHEBI:29105"/>
    </ligand>
</feature>
<feature type="binding site" evidence="1">
    <location>
        <position position="63"/>
    </location>
    <ligand>
        <name>Zn(2+)</name>
        <dbReference type="ChEBI" id="CHEBI:29105"/>
    </ligand>
</feature>
<feature type="binding site" evidence="1">
    <location>
        <position position="79"/>
    </location>
    <ligand>
        <name>Zn(2+)</name>
        <dbReference type="ChEBI" id="CHEBI:29105"/>
    </ligand>
</feature>
<feature type="binding site" evidence="1">
    <location>
        <position position="85"/>
    </location>
    <ligand>
        <name>Zn(2+)</name>
        <dbReference type="ChEBI" id="CHEBI:29105"/>
    </ligand>
</feature>
<feature type="modified residue" description="N-acetylmethionine" evidence="6">
    <location>
        <position position="1"/>
    </location>
</feature>
<feature type="helix" evidence="7">
    <location>
        <begin position="30"/>
        <end position="34"/>
    </location>
</feature>
<feature type="helix" evidence="7">
    <location>
        <begin position="37"/>
        <end position="39"/>
    </location>
</feature>
<feature type="turn" evidence="7">
    <location>
        <begin position="49"/>
        <end position="51"/>
    </location>
</feature>
<feature type="strand" evidence="7">
    <location>
        <begin position="55"/>
        <end position="60"/>
    </location>
</feature>
<feature type="turn" evidence="7">
    <location>
        <begin position="61"/>
        <end position="63"/>
    </location>
</feature>
<feature type="strand" evidence="7">
    <location>
        <begin position="66"/>
        <end position="68"/>
    </location>
</feature>
<feature type="helix" evidence="7">
    <location>
        <begin position="75"/>
        <end position="82"/>
    </location>
</feature>
<feature type="strand" evidence="7">
    <location>
        <begin position="87"/>
        <end position="90"/>
    </location>
</feature>
<feature type="turn" evidence="7">
    <location>
        <begin position="91"/>
        <end position="93"/>
    </location>
</feature>
<feature type="strand" evidence="7">
    <location>
        <begin position="96"/>
        <end position="98"/>
    </location>
</feature>
<feature type="turn" evidence="7">
    <location>
        <begin position="99"/>
        <end position="102"/>
    </location>
</feature>
<feature type="helix" evidence="7">
    <location>
        <begin position="108"/>
        <end position="110"/>
    </location>
</feature>
<feature type="helix" evidence="7">
    <location>
        <begin position="112"/>
        <end position="121"/>
    </location>
</feature>
<feature type="helix" evidence="7">
    <location>
        <begin position="127"/>
        <end position="131"/>
    </location>
</feature>
<feature type="strand" evidence="7">
    <location>
        <begin position="136"/>
        <end position="138"/>
    </location>
</feature>
<feature type="strand" evidence="7">
    <location>
        <begin position="144"/>
        <end position="146"/>
    </location>
</feature>
<feature type="strand" evidence="7">
    <location>
        <begin position="151"/>
        <end position="153"/>
    </location>
</feature>
<feature type="helix" evidence="7">
    <location>
        <begin position="155"/>
        <end position="169"/>
    </location>
</feature>
<feature type="helix" evidence="7">
    <location>
        <begin position="172"/>
        <end position="180"/>
    </location>
</feature>
<feature type="helix" evidence="7">
    <location>
        <begin position="188"/>
        <end position="200"/>
    </location>
</feature>
<feature type="strand" evidence="7">
    <location>
        <begin position="206"/>
        <end position="210"/>
    </location>
</feature>
<feature type="helix" evidence="7">
    <location>
        <begin position="213"/>
        <end position="222"/>
    </location>
</feature>
<feature type="helix" evidence="7">
    <location>
        <begin position="232"/>
        <end position="246"/>
    </location>
</feature>
<feature type="helix" evidence="7">
    <location>
        <begin position="248"/>
        <end position="258"/>
    </location>
</feature>
<feature type="strand" evidence="7">
    <location>
        <begin position="260"/>
        <end position="265"/>
    </location>
</feature>
<feature type="strand" evidence="7">
    <location>
        <begin position="281"/>
        <end position="291"/>
    </location>
</feature>
<feature type="helix" evidence="7">
    <location>
        <begin position="305"/>
        <end position="307"/>
    </location>
</feature>
<feature type="strand" evidence="7">
    <location>
        <begin position="310"/>
        <end position="312"/>
    </location>
</feature>
<feature type="helix" evidence="7">
    <location>
        <begin position="313"/>
        <end position="316"/>
    </location>
</feature>
<feature type="helix" evidence="7">
    <location>
        <begin position="318"/>
        <end position="321"/>
    </location>
</feature>
<feature type="strand" evidence="7">
    <location>
        <begin position="331"/>
        <end position="336"/>
    </location>
</feature>
<feature type="strand" evidence="7">
    <location>
        <begin position="339"/>
        <end position="345"/>
    </location>
</feature>
<feature type="strand" evidence="7">
    <location>
        <begin position="352"/>
        <end position="354"/>
    </location>
</feature>
<feature type="turn" evidence="7">
    <location>
        <begin position="355"/>
        <end position="358"/>
    </location>
</feature>
<feature type="strand" evidence="7">
    <location>
        <begin position="363"/>
        <end position="365"/>
    </location>
</feature>
<feature type="strand" evidence="7">
    <location>
        <begin position="368"/>
        <end position="372"/>
    </location>
</feature>
<feature type="strand" evidence="7">
    <location>
        <begin position="375"/>
        <end position="388"/>
    </location>
</feature>
<feature type="strand" evidence="7">
    <location>
        <begin position="403"/>
        <end position="412"/>
    </location>
</feature>
<feature type="turn" evidence="7">
    <location>
        <begin position="413"/>
        <end position="416"/>
    </location>
</feature>
<feature type="strand" evidence="7">
    <location>
        <begin position="417"/>
        <end position="422"/>
    </location>
</feature>
<feature type="strand" evidence="7">
    <location>
        <begin position="425"/>
        <end position="429"/>
    </location>
</feature>
<feature type="helix" evidence="7">
    <location>
        <begin position="431"/>
        <end position="436"/>
    </location>
</feature>
<feature type="strand" evidence="7">
    <location>
        <begin position="437"/>
        <end position="446"/>
    </location>
</feature>